<organism>
    <name type="scientific">Mycolicibacterium vanbaalenii (strain DSM 7251 / JCM 13017 / BCRC 16820 / KCTC 9966 / NRRL B-24157 / PYR-1)</name>
    <name type="common">Mycobacterium vanbaalenii</name>
    <dbReference type="NCBI Taxonomy" id="350058"/>
    <lineage>
        <taxon>Bacteria</taxon>
        <taxon>Bacillati</taxon>
        <taxon>Actinomycetota</taxon>
        <taxon>Actinomycetes</taxon>
        <taxon>Mycobacteriales</taxon>
        <taxon>Mycobacteriaceae</taxon>
        <taxon>Mycolicibacterium</taxon>
    </lineage>
</organism>
<reference key="1">
    <citation type="submission" date="2006-12" db="EMBL/GenBank/DDBJ databases">
        <title>Complete sequence of Mycobacterium vanbaalenii PYR-1.</title>
        <authorList>
            <consortium name="US DOE Joint Genome Institute"/>
            <person name="Copeland A."/>
            <person name="Lucas S."/>
            <person name="Lapidus A."/>
            <person name="Barry K."/>
            <person name="Detter J.C."/>
            <person name="Glavina del Rio T."/>
            <person name="Hammon N."/>
            <person name="Israni S."/>
            <person name="Dalin E."/>
            <person name="Tice H."/>
            <person name="Pitluck S."/>
            <person name="Singan V."/>
            <person name="Schmutz J."/>
            <person name="Larimer F."/>
            <person name="Land M."/>
            <person name="Hauser L."/>
            <person name="Kyrpides N."/>
            <person name="Anderson I.J."/>
            <person name="Miller C."/>
            <person name="Richardson P."/>
        </authorList>
    </citation>
    <scope>NUCLEOTIDE SEQUENCE [LARGE SCALE GENOMIC DNA]</scope>
    <source>
        <strain>DSM 7251 / JCM 13017 / BCRC 16820 / KCTC 9966 / NRRL B-24157 / PYR-1</strain>
    </source>
</reference>
<evidence type="ECO:0000255" key="1">
    <source>
        <dbReference type="HAMAP-Rule" id="MF_00083"/>
    </source>
</evidence>
<name>PTH_MYCVP</name>
<keyword id="KW-0963">Cytoplasm</keyword>
<keyword id="KW-0378">Hydrolase</keyword>
<keyword id="KW-0694">RNA-binding</keyword>
<keyword id="KW-0820">tRNA-binding</keyword>
<dbReference type="EC" id="3.1.1.29" evidence="1"/>
<dbReference type="EMBL" id="CP000511">
    <property type="protein sequence ID" value="ABM15561.1"/>
    <property type="molecule type" value="Genomic_DNA"/>
</dbReference>
<dbReference type="RefSeq" id="WP_011781935.1">
    <property type="nucleotide sequence ID" value="NZ_JACKSD010000094.1"/>
</dbReference>
<dbReference type="SMR" id="A1TEG1"/>
<dbReference type="STRING" id="350058.Mvan_4788"/>
<dbReference type="KEGG" id="mva:Mvan_4788"/>
<dbReference type="eggNOG" id="COG0193">
    <property type="taxonomic scope" value="Bacteria"/>
</dbReference>
<dbReference type="HOGENOM" id="CLU_062456_2_2_11"/>
<dbReference type="Proteomes" id="UP000009159">
    <property type="component" value="Chromosome"/>
</dbReference>
<dbReference type="GO" id="GO:0005737">
    <property type="term" value="C:cytoplasm"/>
    <property type="evidence" value="ECO:0007669"/>
    <property type="project" value="UniProtKB-SubCell"/>
</dbReference>
<dbReference type="GO" id="GO:0004045">
    <property type="term" value="F:peptidyl-tRNA hydrolase activity"/>
    <property type="evidence" value="ECO:0007669"/>
    <property type="project" value="UniProtKB-UniRule"/>
</dbReference>
<dbReference type="GO" id="GO:0000049">
    <property type="term" value="F:tRNA binding"/>
    <property type="evidence" value="ECO:0007669"/>
    <property type="project" value="UniProtKB-UniRule"/>
</dbReference>
<dbReference type="GO" id="GO:0006515">
    <property type="term" value="P:protein quality control for misfolded or incompletely synthesized proteins"/>
    <property type="evidence" value="ECO:0007669"/>
    <property type="project" value="UniProtKB-UniRule"/>
</dbReference>
<dbReference type="GO" id="GO:0072344">
    <property type="term" value="P:rescue of stalled ribosome"/>
    <property type="evidence" value="ECO:0007669"/>
    <property type="project" value="UniProtKB-UniRule"/>
</dbReference>
<dbReference type="CDD" id="cd00462">
    <property type="entry name" value="PTH"/>
    <property type="match status" value="1"/>
</dbReference>
<dbReference type="FunFam" id="3.40.50.1470:FF:000001">
    <property type="entry name" value="Peptidyl-tRNA hydrolase"/>
    <property type="match status" value="1"/>
</dbReference>
<dbReference type="Gene3D" id="3.40.50.1470">
    <property type="entry name" value="Peptidyl-tRNA hydrolase"/>
    <property type="match status" value="1"/>
</dbReference>
<dbReference type="HAMAP" id="MF_00083">
    <property type="entry name" value="Pept_tRNA_hydro_bact"/>
    <property type="match status" value="1"/>
</dbReference>
<dbReference type="InterPro" id="IPR001328">
    <property type="entry name" value="Pept_tRNA_hydro"/>
</dbReference>
<dbReference type="InterPro" id="IPR018171">
    <property type="entry name" value="Pept_tRNA_hydro_CS"/>
</dbReference>
<dbReference type="InterPro" id="IPR036416">
    <property type="entry name" value="Pept_tRNA_hydro_sf"/>
</dbReference>
<dbReference type="NCBIfam" id="TIGR00447">
    <property type="entry name" value="pth"/>
    <property type="match status" value="1"/>
</dbReference>
<dbReference type="PANTHER" id="PTHR17224">
    <property type="entry name" value="PEPTIDYL-TRNA HYDROLASE"/>
    <property type="match status" value="1"/>
</dbReference>
<dbReference type="PANTHER" id="PTHR17224:SF1">
    <property type="entry name" value="PEPTIDYL-TRNA HYDROLASE"/>
    <property type="match status" value="1"/>
</dbReference>
<dbReference type="Pfam" id="PF01195">
    <property type="entry name" value="Pept_tRNA_hydro"/>
    <property type="match status" value="1"/>
</dbReference>
<dbReference type="SUPFAM" id="SSF53178">
    <property type="entry name" value="Peptidyl-tRNA hydrolase-like"/>
    <property type="match status" value="1"/>
</dbReference>
<dbReference type="PROSITE" id="PS01195">
    <property type="entry name" value="PEPT_TRNA_HYDROL_1"/>
    <property type="match status" value="1"/>
</dbReference>
<dbReference type="PROSITE" id="PS01196">
    <property type="entry name" value="PEPT_TRNA_HYDROL_2"/>
    <property type="match status" value="1"/>
</dbReference>
<sequence>MAEPVLVVGLGNPGPQYATTRHNAGFMVVDILADRMGEKFKVHKKSGAEVATGRLAGRPVVLAKPRVYMNESGRQVGPLAKFYSVAPADVVIVHDELDIDFGRIRLKAGGGVAGHNGLRSVASALGGNDFQRVRVGIGRPPGHKSGASFVLENFNSVERKEVPTILEQAADATELLVAQGLEPAQNTVHAWG</sequence>
<feature type="chain" id="PRO_1000010618" description="Peptidyl-tRNA hydrolase">
    <location>
        <begin position="1"/>
        <end position="192"/>
    </location>
</feature>
<feature type="active site" description="Proton acceptor" evidence="1">
    <location>
        <position position="22"/>
    </location>
</feature>
<feature type="binding site" evidence="1">
    <location>
        <position position="17"/>
    </location>
    <ligand>
        <name>tRNA</name>
        <dbReference type="ChEBI" id="CHEBI:17843"/>
    </ligand>
</feature>
<feature type="binding site" evidence="1">
    <location>
        <position position="68"/>
    </location>
    <ligand>
        <name>tRNA</name>
        <dbReference type="ChEBI" id="CHEBI:17843"/>
    </ligand>
</feature>
<feature type="binding site" evidence="1">
    <location>
        <position position="70"/>
    </location>
    <ligand>
        <name>tRNA</name>
        <dbReference type="ChEBI" id="CHEBI:17843"/>
    </ligand>
</feature>
<feature type="binding site" evidence="1">
    <location>
        <position position="116"/>
    </location>
    <ligand>
        <name>tRNA</name>
        <dbReference type="ChEBI" id="CHEBI:17843"/>
    </ligand>
</feature>
<feature type="site" description="Discriminates between blocked and unblocked aminoacyl-tRNA" evidence="1">
    <location>
        <position position="12"/>
    </location>
</feature>
<feature type="site" description="Stabilizes the basic form of H active site to accept a proton" evidence="1">
    <location>
        <position position="95"/>
    </location>
</feature>
<proteinExistence type="inferred from homology"/>
<protein>
    <recommendedName>
        <fullName evidence="1">Peptidyl-tRNA hydrolase</fullName>
        <shortName evidence="1">Pth</shortName>
        <ecNumber evidence="1">3.1.1.29</ecNumber>
    </recommendedName>
</protein>
<accession>A1TEG1</accession>
<comment type="function">
    <text evidence="1">Hydrolyzes ribosome-free peptidyl-tRNAs (with 1 or more amino acids incorporated), which drop off the ribosome during protein synthesis, or as a result of ribosome stalling.</text>
</comment>
<comment type="function">
    <text evidence="1">Catalyzes the release of premature peptidyl moieties from peptidyl-tRNA molecules trapped in stalled 50S ribosomal subunits, and thus maintains levels of free tRNAs and 50S ribosomes.</text>
</comment>
<comment type="catalytic activity">
    <reaction evidence="1">
        <text>an N-acyl-L-alpha-aminoacyl-tRNA + H2O = an N-acyl-L-amino acid + a tRNA + H(+)</text>
        <dbReference type="Rhea" id="RHEA:54448"/>
        <dbReference type="Rhea" id="RHEA-COMP:10123"/>
        <dbReference type="Rhea" id="RHEA-COMP:13883"/>
        <dbReference type="ChEBI" id="CHEBI:15377"/>
        <dbReference type="ChEBI" id="CHEBI:15378"/>
        <dbReference type="ChEBI" id="CHEBI:59874"/>
        <dbReference type="ChEBI" id="CHEBI:78442"/>
        <dbReference type="ChEBI" id="CHEBI:138191"/>
        <dbReference type="EC" id="3.1.1.29"/>
    </reaction>
</comment>
<comment type="subunit">
    <text evidence="1">Monomer.</text>
</comment>
<comment type="subcellular location">
    <subcellularLocation>
        <location evidence="1">Cytoplasm</location>
    </subcellularLocation>
</comment>
<comment type="similarity">
    <text evidence="1">Belongs to the PTH family.</text>
</comment>
<gene>
    <name evidence="1" type="primary">pth</name>
    <name type="ordered locus">Mvan_4788</name>
</gene>